<feature type="chain" id="PRO_0000144743" description="Claudin-4">
    <location>
        <begin position="1"/>
        <end position="209"/>
    </location>
</feature>
<feature type="topological domain" description="Cytoplasmic" evidence="2">
    <location>
        <begin position="1"/>
        <end position="7"/>
    </location>
</feature>
<feature type="transmembrane region" description="Helical" evidence="2">
    <location>
        <begin position="8"/>
        <end position="28"/>
    </location>
</feature>
<feature type="topological domain" description="Extracellular" evidence="2">
    <location>
        <begin position="29"/>
        <end position="81"/>
    </location>
</feature>
<feature type="transmembrane region" description="Helical" evidence="2">
    <location>
        <begin position="82"/>
        <end position="102"/>
    </location>
</feature>
<feature type="topological domain" description="Cytoplasmic" evidence="2">
    <location>
        <begin position="103"/>
        <end position="117"/>
    </location>
</feature>
<feature type="transmembrane region" description="Helical" evidence="2">
    <location>
        <begin position="118"/>
        <end position="138"/>
    </location>
</feature>
<feature type="topological domain" description="Extracellular" evidence="2">
    <location>
        <begin position="139"/>
        <end position="160"/>
    </location>
</feature>
<feature type="transmembrane region" description="Helical" evidence="2">
    <location>
        <begin position="161"/>
        <end position="181"/>
    </location>
</feature>
<feature type="topological domain" description="Cytoplasmic" evidence="2">
    <location>
        <begin position="182"/>
        <end position="209"/>
    </location>
</feature>
<feature type="region of interest" description="Interaction with EPHA2" evidence="3">
    <location>
        <begin position="1"/>
        <end position="103"/>
    </location>
</feature>
<feature type="region of interest" description="Interactions with TJP1, TJP2 and TJP3" evidence="1">
    <location>
        <begin position="208"/>
        <end position="209"/>
    </location>
</feature>
<feature type="modified residue" description="Phosphotyrosine; by EPHA2" evidence="3">
    <location>
        <position position="208"/>
    </location>
</feature>
<feature type="disulfide bond" evidence="6 17">
    <location>
        <begin position="54"/>
        <end position="64"/>
    </location>
</feature>
<feature type="mutagenesis site" description="Decreases interaction with Clostridium perfringens CPE." evidence="6">
    <original>F</original>
    <variation>A</variation>
    <location>
        <position position="35"/>
    </location>
</feature>
<feature type="mutagenesis site" description="Abolishes interaction with Clostridium perfringens CPE." evidence="6">
    <original>F</original>
    <variation>D</variation>
    <location>
        <position position="35"/>
    </location>
</feature>
<feature type="mutagenesis site" description="No effect on interaction with Clostridium perfringens CPE." evidence="6">
    <original>I</original>
    <variation>A</variation>
    <location>
        <position position="40"/>
    </location>
</feature>
<feature type="mutagenesis site" description="Strongly decreases interaction with Clostridium perfringens CPE." evidence="6">
    <original>I</original>
    <variation>D</variation>
    <location>
        <position position="40"/>
    </location>
</feature>
<feature type="mutagenesis site" description="Decreases interaction with Clostridium perfringens CPE." evidence="6">
    <original>N</original>
    <variation>A</variation>
    <variation>D</variation>
    <location>
        <position position="53"/>
    </location>
</feature>
<feature type="mutagenesis site" description="Loss of phosphorylation by EPHA2." evidence="3">
    <original>Y</original>
    <variation>F</variation>
    <location>
        <position position="208"/>
    </location>
</feature>
<feature type="strand" evidence="18">
    <location>
        <begin position="1"/>
        <end position="3"/>
    </location>
</feature>
<feature type="helix" evidence="20">
    <location>
        <begin position="7"/>
        <end position="26"/>
    </location>
</feature>
<feature type="strand" evidence="20">
    <location>
        <begin position="30"/>
        <end position="35"/>
    </location>
</feature>
<feature type="strand" evidence="20">
    <location>
        <begin position="44"/>
        <end position="48"/>
    </location>
</feature>
<feature type="strand" evidence="20">
    <location>
        <begin position="50"/>
        <end position="56"/>
    </location>
</feature>
<feature type="strand" evidence="20">
    <location>
        <begin position="58"/>
        <end position="60"/>
    </location>
</feature>
<feature type="strand" evidence="20">
    <location>
        <begin position="63"/>
        <end position="66"/>
    </location>
</feature>
<feature type="strand" evidence="20">
    <location>
        <begin position="70"/>
        <end position="73"/>
    </location>
</feature>
<feature type="helix" evidence="20">
    <location>
        <begin position="75"/>
        <end position="100"/>
    </location>
</feature>
<feature type="strand" evidence="20">
    <location>
        <begin position="101"/>
        <end position="105"/>
    </location>
</feature>
<feature type="helix" evidence="20">
    <location>
        <begin position="113"/>
        <end position="148"/>
    </location>
</feature>
<feature type="strand" evidence="19">
    <location>
        <begin position="158"/>
        <end position="160"/>
    </location>
</feature>
<feature type="helix" evidence="20">
    <location>
        <begin position="162"/>
        <end position="182"/>
    </location>
</feature>
<name>CLD4_HUMAN</name>
<dbReference type="EMBL" id="AB000712">
    <property type="protein sequence ID" value="BAA22984.1"/>
    <property type="molecule type" value="mRNA"/>
</dbReference>
<dbReference type="EMBL" id="BT006989">
    <property type="protein sequence ID" value="AAP35635.1"/>
    <property type="molecule type" value="mRNA"/>
</dbReference>
<dbReference type="EMBL" id="BC000671">
    <property type="protein sequence ID" value="AAH00671.1"/>
    <property type="molecule type" value="mRNA"/>
</dbReference>
<dbReference type="CCDS" id="CCDS5560.1"/>
<dbReference type="RefSeq" id="NP_001296.1">
    <property type="nucleotide sequence ID" value="NM_001305.5"/>
</dbReference>
<dbReference type="PDB" id="5B2G">
    <property type="method" value="X-ray"/>
    <property type="resolution" value="3.50 A"/>
    <property type="chains" value="A/C/E/G=1-183"/>
</dbReference>
<dbReference type="PDB" id="7KP4">
    <property type="method" value="X-ray"/>
    <property type="resolution" value="3.37 A"/>
    <property type="chains" value="A=1-209"/>
</dbReference>
<dbReference type="PDB" id="7TDM">
    <property type="method" value="EM"/>
    <property type="resolution" value="6.90 A"/>
    <property type="chains" value="A=1-209"/>
</dbReference>
<dbReference type="PDB" id="7TDN">
    <property type="method" value="EM"/>
    <property type="resolution" value="5.00 A"/>
    <property type="chains" value="A=1-209"/>
</dbReference>
<dbReference type="PDB" id="8U4V">
    <property type="method" value="EM"/>
    <property type="resolution" value="2.99 A"/>
    <property type="chains" value="A=1-209"/>
</dbReference>
<dbReference type="PDB" id="8U5B">
    <property type="method" value="EM"/>
    <property type="resolution" value="5.30 A"/>
    <property type="chains" value="A=1-209"/>
</dbReference>
<dbReference type="PDB" id="9CMH">
    <property type="method" value="EM"/>
    <property type="resolution" value="4.00 A"/>
    <property type="chains" value="A=1-209"/>
</dbReference>
<dbReference type="PDB" id="9CMI">
    <property type="method" value="EM"/>
    <property type="resolution" value="2.83 A"/>
    <property type="chains" value="A=1-209"/>
</dbReference>
<dbReference type="PDBsum" id="5B2G"/>
<dbReference type="PDBsum" id="7KP4"/>
<dbReference type="PDBsum" id="7TDM"/>
<dbReference type="PDBsum" id="7TDN"/>
<dbReference type="PDBsum" id="8U4V"/>
<dbReference type="PDBsum" id="8U5B"/>
<dbReference type="PDBsum" id="9CMH"/>
<dbReference type="PDBsum" id="9CMI"/>
<dbReference type="EMDB" id="EMD-25834"/>
<dbReference type="EMDB" id="EMD-25835"/>
<dbReference type="EMDB" id="EMD-41899"/>
<dbReference type="EMDB" id="EMD-41915"/>
<dbReference type="EMDB" id="EMD-44479"/>
<dbReference type="EMDB" id="EMD-45748"/>
<dbReference type="EMDB" id="EMD-45749"/>
<dbReference type="SMR" id="O14493"/>
<dbReference type="BioGRID" id="107756">
    <property type="interactions" value="72"/>
</dbReference>
<dbReference type="FunCoup" id="O14493">
    <property type="interactions" value="391"/>
</dbReference>
<dbReference type="IntAct" id="O14493">
    <property type="interactions" value="16"/>
</dbReference>
<dbReference type="STRING" id="9606.ENSP00000409544"/>
<dbReference type="TCDB" id="1.H.1.1.6">
    <property type="family name" value="the claudin tight junction (claudin1) family"/>
</dbReference>
<dbReference type="iPTMnet" id="O14493"/>
<dbReference type="PhosphoSitePlus" id="O14493"/>
<dbReference type="SwissPalm" id="O14493"/>
<dbReference type="BioMuta" id="CLDN4"/>
<dbReference type="jPOST" id="O14493"/>
<dbReference type="MassIVE" id="O14493"/>
<dbReference type="PaxDb" id="9606-ENSP00000409544"/>
<dbReference type="PeptideAtlas" id="O14493"/>
<dbReference type="ProteomicsDB" id="48036"/>
<dbReference type="Pumba" id="O14493"/>
<dbReference type="ABCD" id="O14493">
    <property type="antibodies" value="3 sequenced antibodies"/>
</dbReference>
<dbReference type="Antibodypedia" id="3618">
    <property type="antibodies" value="607 antibodies from 39 providers"/>
</dbReference>
<dbReference type="DNASU" id="1364"/>
<dbReference type="Ensembl" id="ENST00000340958.4">
    <property type="protein sequence ID" value="ENSP00000342445.2"/>
    <property type="gene ID" value="ENSG00000189143.10"/>
</dbReference>
<dbReference type="Ensembl" id="ENST00000431918.1">
    <property type="protein sequence ID" value="ENSP00000388639.1"/>
    <property type="gene ID" value="ENSG00000189143.10"/>
</dbReference>
<dbReference type="Ensembl" id="ENST00000435050.1">
    <property type="protein sequence ID" value="ENSP00000409544.1"/>
    <property type="gene ID" value="ENSG00000189143.10"/>
</dbReference>
<dbReference type="GeneID" id="1364"/>
<dbReference type="KEGG" id="hsa:1364"/>
<dbReference type="MANE-Select" id="ENST00000340958.4">
    <property type="protein sequence ID" value="ENSP00000342445.2"/>
    <property type="RefSeq nucleotide sequence ID" value="NM_001305.5"/>
    <property type="RefSeq protein sequence ID" value="NP_001296.1"/>
</dbReference>
<dbReference type="AGR" id="HGNC:2046"/>
<dbReference type="CTD" id="1364"/>
<dbReference type="DisGeNET" id="1364"/>
<dbReference type="GeneCards" id="CLDN4"/>
<dbReference type="HGNC" id="HGNC:2046">
    <property type="gene designation" value="CLDN4"/>
</dbReference>
<dbReference type="HPA" id="ENSG00000189143">
    <property type="expression patterns" value="Tissue enhanced (esophagus, urinary bladder)"/>
</dbReference>
<dbReference type="MIM" id="602909">
    <property type="type" value="gene"/>
</dbReference>
<dbReference type="neXtProt" id="NX_O14493"/>
<dbReference type="OpenTargets" id="ENSG00000189143"/>
<dbReference type="PharmGKB" id="PA26572"/>
<dbReference type="VEuPathDB" id="HostDB:ENSG00000189143"/>
<dbReference type="eggNOG" id="ENOG502QSCN">
    <property type="taxonomic scope" value="Eukaryota"/>
</dbReference>
<dbReference type="GeneTree" id="ENSGT00940000154762"/>
<dbReference type="HOGENOM" id="CLU_076370_1_2_1"/>
<dbReference type="InParanoid" id="O14493"/>
<dbReference type="OMA" id="NCPPRAD"/>
<dbReference type="OrthoDB" id="8830244at2759"/>
<dbReference type="PAN-GO" id="O14493">
    <property type="GO annotations" value="4 GO annotations based on evolutionary models"/>
</dbReference>
<dbReference type="PhylomeDB" id="O14493"/>
<dbReference type="TreeFam" id="TF331936"/>
<dbReference type="PathwayCommons" id="O14493"/>
<dbReference type="Reactome" id="R-HSA-420029">
    <property type="pathway name" value="Tight junction interactions"/>
</dbReference>
<dbReference type="SignaLink" id="O14493"/>
<dbReference type="SIGNOR" id="O14493"/>
<dbReference type="BioGRID-ORCS" id="1364">
    <property type="hits" value="15 hits in 1146 CRISPR screens"/>
</dbReference>
<dbReference type="ChiTaRS" id="CLDN4">
    <property type="organism name" value="human"/>
</dbReference>
<dbReference type="GeneWiki" id="CLDN4"/>
<dbReference type="GenomeRNAi" id="1364"/>
<dbReference type="Pharos" id="O14493">
    <property type="development level" value="Tbio"/>
</dbReference>
<dbReference type="PRO" id="PR:O14493"/>
<dbReference type="Proteomes" id="UP000005640">
    <property type="component" value="Chromosome 7"/>
</dbReference>
<dbReference type="RNAct" id="O14493">
    <property type="molecule type" value="protein"/>
</dbReference>
<dbReference type="Bgee" id="ENSG00000189143">
    <property type="expression patterns" value="Expressed in mucosa of transverse colon and 146 other cell types or tissues"/>
</dbReference>
<dbReference type="ExpressionAtlas" id="O14493">
    <property type="expression patterns" value="baseline and differential"/>
</dbReference>
<dbReference type="GO" id="GO:0016324">
    <property type="term" value="C:apical plasma membrane"/>
    <property type="evidence" value="ECO:0007669"/>
    <property type="project" value="Ensembl"/>
</dbReference>
<dbReference type="GO" id="GO:0016327">
    <property type="term" value="C:apicolateral plasma membrane"/>
    <property type="evidence" value="ECO:0007669"/>
    <property type="project" value="Ensembl"/>
</dbReference>
<dbReference type="GO" id="GO:0009925">
    <property type="term" value="C:basal plasma membrane"/>
    <property type="evidence" value="ECO:0007669"/>
    <property type="project" value="Ensembl"/>
</dbReference>
<dbReference type="GO" id="GO:0005923">
    <property type="term" value="C:bicellular tight junction"/>
    <property type="evidence" value="ECO:0000314"/>
    <property type="project" value="UniProtKB"/>
</dbReference>
<dbReference type="GO" id="GO:0005911">
    <property type="term" value="C:cell-cell junction"/>
    <property type="evidence" value="ECO:0000314"/>
    <property type="project" value="ARUK-UCL"/>
</dbReference>
<dbReference type="GO" id="GO:0034707">
    <property type="term" value="C:chloride channel complex"/>
    <property type="evidence" value="ECO:0007669"/>
    <property type="project" value="UniProtKB-KW"/>
</dbReference>
<dbReference type="GO" id="GO:0016328">
    <property type="term" value="C:lateral plasma membrane"/>
    <property type="evidence" value="ECO:0007669"/>
    <property type="project" value="Ensembl"/>
</dbReference>
<dbReference type="GO" id="GO:0005886">
    <property type="term" value="C:plasma membrane"/>
    <property type="evidence" value="ECO:0000314"/>
    <property type="project" value="UniProtKB"/>
</dbReference>
<dbReference type="GO" id="GO:0070160">
    <property type="term" value="C:tight junction"/>
    <property type="evidence" value="ECO:0000314"/>
    <property type="project" value="ARUK-UCL"/>
</dbReference>
<dbReference type="GO" id="GO:0005254">
    <property type="term" value="F:chloride channel activity"/>
    <property type="evidence" value="ECO:0007669"/>
    <property type="project" value="UniProtKB-KW"/>
</dbReference>
<dbReference type="GO" id="GO:0042802">
    <property type="term" value="F:identical protein binding"/>
    <property type="evidence" value="ECO:0000250"/>
    <property type="project" value="UniProtKB"/>
</dbReference>
<dbReference type="GO" id="GO:0005198">
    <property type="term" value="F:structural molecule activity"/>
    <property type="evidence" value="ECO:0007669"/>
    <property type="project" value="InterPro"/>
</dbReference>
<dbReference type="GO" id="GO:0004888">
    <property type="term" value="F:transmembrane signaling receptor activity"/>
    <property type="evidence" value="ECO:0000304"/>
    <property type="project" value="ProtInc"/>
</dbReference>
<dbReference type="GO" id="GO:0070830">
    <property type="term" value="P:bicellular tight junction assembly"/>
    <property type="evidence" value="ECO:0000318"/>
    <property type="project" value="GO_Central"/>
</dbReference>
<dbReference type="GO" id="GO:0016338">
    <property type="term" value="P:calcium-independent cell-cell adhesion via plasma membrane cell-adhesion molecules"/>
    <property type="evidence" value="ECO:0000250"/>
    <property type="project" value="UniProtKB"/>
</dbReference>
<dbReference type="GO" id="GO:0007155">
    <property type="term" value="P:cell adhesion"/>
    <property type="evidence" value="ECO:0000318"/>
    <property type="project" value="GO_Central"/>
</dbReference>
<dbReference type="GO" id="GO:0007623">
    <property type="term" value="P:circadian rhythm"/>
    <property type="evidence" value="ECO:0007669"/>
    <property type="project" value="Ensembl"/>
</dbReference>
<dbReference type="GO" id="GO:0061436">
    <property type="term" value="P:establishment of skin barrier"/>
    <property type="evidence" value="ECO:0000315"/>
    <property type="project" value="UniProtKB"/>
</dbReference>
<dbReference type="GO" id="GO:0007565">
    <property type="term" value="P:female pregnancy"/>
    <property type="evidence" value="ECO:0007669"/>
    <property type="project" value="Ensembl"/>
</dbReference>
<dbReference type="GO" id="GO:0160184">
    <property type="term" value="P:paracellular transport"/>
    <property type="evidence" value="ECO:0000250"/>
    <property type="project" value="UniProtKB"/>
</dbReference>
<dbReference type="GO" id="GO:0030335">
    <property type="term" value="P:positive regulation of cell migration"/>
    <property type="evidence" value="ECO:0000315"/>
    <property type="project" value="ARUK-UCL"/>
</dbReference>
<dbReference type="GO" id="GO:0090303">
    <property type="term" value="P:positive regulation of wound healing"/>
    <property type="evidence" value="ECO:0000315"/>
    <property type="project" value="ARUK-UCL"/>
</dbReference>
<dbReference type="GO" id="GO:0022604">
    <property type="term" value="P:regulation of cell morphogenesis"/>
    <property type="evidence" value="ECO:0000315"/>
    <property type="project" value="ARUK-UCL"/>
</dbReference>
<dbReference type="GO" id="GO:0070293">
    <property type="term" value="P:renal absorption"/>
    <property type="evidence" value="ECO:0000250"/>
    <property type="project" value="UniProtKB"/>
</dbReference>
<dbReference type="GO" id="GO:0032570">
    <property type="term" value="P:response to progesterone"/>
    <property type="evidence" value="ECO:0007669"/>
    <property type="project" value="Ensembl"/>
</dbReference>
<dbReference type="FunFam" id="1.20.140.150:FF:000001">
    <property type="entry name" value="Claudin"/>
    <property type="match status" value="1"/>
</dbReference>
<dbReference type="Gene3D" id="1.20.140.150">
    <property type="match status" value="1"/>
</dbReference>
<dbReference type="InterPro" id="IPR006187">
    <property type="entry name" value="Claudin"/>
</dbReference>
<dbReference type="InterPro" id="IPR003550">
    <property type="entry name" value="Claudin4"/>
</dbReference>
<dbReference type="InterPro" id="IPR017974">
    <property type="entry name" value="Claudin_CS"/>
</dbReference>
<dbReference type="InterPro" id="IPR004031">
    <property type="entry name" value="PMP22/EMP/MP20/Claudin"/>
</dbReference>
<dbReference type="PANTHER" id="PTHR12002">
    <property type="entry name" value="CLAUDIN"/>
    <property type="match status" value="1"/>
</dbReference>
<dbReference type="Pfam" id="PF00822">
    <property type="entry name" value="PMP22_Claudin"/>
    <property type="match status" value="1"/>
</dbReference>
<dbReference type="PRINTS" id="PR01077">
    <property type="entry name" value="CLAUDIN"/>
</dbReference>
<dbReference type="PRINTS" id="PR01379">
    <property type="entry name" value="CLAUDIN4"/>
</dbReference>
<dbReference type="PROSITE" id="PS01346">
    <property type="entry name" value="CLAUDIN"/>
    <property type="match status" value="1"/>
</dbReference>
<protein>
    <recommendedName>
        <fullName evidence="10">Claudin-4</fullName>
    </recommendedName>
    <alternativeName>
        <fullName evidence="12">Clostridium perfringens enterotoxin receptor</fullName>
        <shortName evidence="12">CPE-R</shortName>
        <shortName evidence="12">CPE-receptor</shortName>
    </alternativeName>
    <alternativeName>
        <fullName>Williams-Beuren syndrome chromosomal region 8 protein</fullName>
    </alternativeName>
</protein>
<accession>O14493</accession>
<gene>
    <name evidence="11 16" type="primary">CLDN4</name>
    <name evidence="12" type="synonym">CPER</name>
    <name evidence="12" type="synonym">CPETR1</name>
    <name type="synonym">WBSCR8</name>
</gene>
<reference key="1">
    <citation type="journal article" date="1997" name="J. Biol. Chem.">
        <title>Clostridium perfringens enterotoxin utilizes two structurally related membrane proteins as functional receptors in vivo.</title>
        <authorList>
            <person name="Katahira J."/>
            <person name="Sugiyama H."/>
            <person name="Inoue N."/>
            <person name="Horiguchi Y."/>
            <person name="Matsuda M."/>
            <person name="Sugimoto N."/>
        </authorList>
    </citation>
    <scope>NUCLEOTIDE SEQUENCE [MRNA]</scope>
    <source>
        <tissue>Fetal brain</tissue>
    </source>
</reference>
<reference key="2">
    <citation type="submission" date="2003-05" db="EMBL/GenBank/DDBJ databases">
        <title>Cloning of human full-length CDSs in BD Creator(TM) system donor vector.</title>
        <authorList>
            <person name="Kalnine N."/>
            <person name="Chen X."/>
            <person name="Rolfs A."/>
            <person name="Halleck A."/>
            <person name="Hines L."/>
            <person name="Eisenstein S."/>
            <person name="Koundinya M."/>
            <person name="Raphael J."/>
            <person name="Moreira D."/>
            <person name="Kelley T."/>
            <person name="LaBaer J."/>
            <person name="Lin Y."/>
            <person name="Phelan M."/>
            <person name="Farmer A."/>
        </authorList>
    </citation>
    <scope>NUCLEOTIDE SEQUENCE [LARGE SCALE MRNA]</scope>
</reference>
<reference key="3">
    <citation type="journal article" date="2004" name="Genome Res.">
        <title>The status, quality, and expansion of the NIH full-length cDNA project: the Mammalian Gene Collection (MGC).</title>
        <authorList>
            <consortium name="The MGC Project Team"/>
        </authorList>
    </citation>
    <scope>NUCLEOTIDE SEQUENCE [LARGE SCALE MRNA]</scope>
    <source>
        <tissue>Colon</tissue>
    </source>
</reference>
<reference key="4">
    <citation type="journal article" date="2005" name="J. Biol. Chem.">
        <title>EphA2 phosphorylates the cytoplasmic tail of Claudin-4 and mediates paracellular permeability.</title>
        <authorList>
            <person name="Tanaka M."/>
            <person name="Kamata R."/>
            <person name="Sakai R."/>
        </authorList>
    </citation>
    <scope>INTERACTION WITH EPHA2 AND TJP1</scope>
    <scope>MUTAGENESIS OF TYR-208</scope>
    <scope>PHOSPHORYLATION AT TYR-208 BY EPHA2</scope>
</reference>
<reference key="5">
    <citation type="journal article" date="2010" name="J. Biol. Chem.">
        <title>Claudin association with CD81 defines hepatitis C virus entry.</title>
        <authorList>
            <person name="Harris H.J."/>
            <person name="Davis C."/>
            <person name="Mullins J.G."/>
            <person name="Hu K."/>
            <person name="Goodall M."/>
            <person name="Farquhar M.J."/>
            <person name="Mee C.J."/>
            <person name="McCaffrey K."/>
            <person name="Young S."/>
            <person name="Drummer H."/>
            <person name="Balfe P."/>
            <person name="McKeating J.A."/>
        </authorList>
    </citation>
    <scope>SUBCELLULAR LOCATION</scope>
    <scope>INTERACTION WITH CLDN1</scope>
</reference>
<reference key="6">
    <citation type="journal article" date="2011" name="BMC Syst. Biol.">
        <title>Initial characterization of the human central proteome.</title>
        <authorList>
            <person name="Burkard T.R."/>
            <person name="Planyavsky M."/>
            <person name="Kaupe I."/>
            <person name="Breitwieser F.P."/>
            <person name="Buerckstuemmer T."/>
            <person name="Bennett K.L."/>
            <person name="Superti-Furga G."/>
            <person name="Colinge J."/>
        </authorList>
    </citation>
    <scope>IDENTIFICATION BY MASS SPECTROMETRY [LARGE SCALE ANALYSIS]</scope>
</reference>
<reference key="7">
    <citation type="journal article" date="2014" name="Am. J. Respir. Cell Mol. Biol.">
        <title>Claudin-18 deficiency results in alveolar barrier dysfunction and impaired alveologenesis in mice.</title>
        <authorList>
            <person name="LaFemina M.J."/>
            <person name="Sutherland K.M."/>
            <person name="Bentley T."/>
            <person name="Gonzales L.W."/>
            <person name="Allen L."/>
            <person name="Chapin C.J."/>
            <person name="Rokkam D."/>
            <person name="Sweerus K.A."/>
            <person name="Dobbs L.G."/>
            <person name="Ballard P.L."/>
            <person name="Frank J.A."/>
        </authorList>
    </citation>
    <scope>DEVELOPMENTAL STAGE</scope>
</reference>
<reference key="8">
    <citation type="journal article" date="2019" name="Cell. Mol. Life Sci.">
        <title>Tight junction proteins at the blood-brain barrier: far more than claudin-5.</title>
        <authorList>
            <person name="Berndt P."/>
            <person name="Winkler L."/>
            <person name="Cording J."/>
            <person name="Breitkreuz-Korff O."/>
            <person name="Rex A."/>
            <person name="Dithmer S."/>
            <person name="Rausch V."/>
            <person name="Blasig R."/>
            <person name="Richter M."/>
            <person name="Sporbert A."/>
            <person name="Wolburg H."/>
            <person name="Blasig I.E."/>
            <person name="Haseloff R.F."/>
        </authorList>
    </citation>
    <scope>SUBCELLULAR LOCATION</scope>
</reference>
<reference key="9">
    <citation type="journal article" date="2022" name="Nat. Commun.">
        <title>Tight junction channel regulation by interclaudin interference.</title>
        <authorList>
            <person name="Shashikanth N."/>
            <person name="France M.M."/>
            <person name="Xiao R."/>
            <person name="Haest X."/>
            <person name="Rizzo H.E."/>
            <person name="Yeste J."/>
            <person name="Reiner J."/>
            <person name="Turner J.R."/>
        </authorList>
    </citation>
    <scope>FUNCTION</scope>
    <scope>CAUTION</scope>
</reference>
<reference key="10">
    <citation type="journal article" date="2022" name="Nat. Commun.">
        <title>Nanoscale segregation of channel and barrier claudins enables paracellular ion flux.</title>
        <authorList>
            <person name="Gonschior H."/>
            <person name="Schmied C."/>
            <person name="Van der Veen R.E."/>
            <person name="Eichhorst J."/>
            <person name="Himmerkus N."/>
            <person name="Piontek J."/>
            <person name="Guenzel D."/>
            <person name="Bleich M."/>
            <person name="Furuse M."/>
            <person name="Haucke V."/>
            <person name="Lehmann M."/>
        </authorList>
    </citation>
    <scope>FUNCTION</scope>
    <scope>SUBUNIT</scope>
    <scope>CAUTION</scope>
</reference>
<reference evidence="17" key="11">
    <citation type="journal article" date="2016" name="Sci. Rep.">
        <title>Structural basis for disruption of claudin assembly in tight junctions by an enterotoxin.</title>
        <authorList>
            <person name="Shinoda T."/>
            <person name="Shinya N."/>
            <person name="Ito K."/>
            <person name="Ohsawa N."/>
            <person name="Terada T."/>
            <person name="Hirata K."/>
            <person name="Kawano Y."/>
            <person name="Yamamoto M."/>
            <person name="Kimura-Someya T."/>
            <person name="Yokoyama S."/>
            <person name="Shirouzu M."/>
        </authorList>
    </citation>
    <scope>X-RAY CRYSTALLOGRAPHY (3.50 ANGSTROMS) OF 1-183 IN COMPLEX WITH CLOSTRIDIUM PERFRINGENS CPE</scope>
    <scope>INTERACTION WITH CLOSTRIDIUM PERFRINGENS CPE</scope>
    <scope>MUTAGENESIS OF PHE-35; ILE-40 AND ASN-53</scope>
    <scope>DISULFIDE BOND</scope>
</reference>
<organism>
    <name type="scientific">Homo sapiens</name>
    <name type="common">Human</name>
    <dbReference type="NCBI Taxonomy" id="9606"/>
    <lineage>
        <taxon>Eukaryota</taxon>
        <taxon>Metazoa</taxon>
        <taxon>Chordata</taxon>
        <taxon>Craniata</taxon>
        <taxon>Vertebrata</taxon>
        <taxon>Euteleostomi</taxon>
        <taxon>Mammalia</taxon>
        <taxon>Eutheria</taxon>
        <taxon>Euarchontoglires</taxon>
        <taxon>Primates</taxon>
        <taxon>Haplorrhini</taxon>
        <taxon>Catarrhini</taxon>
        <taxon>Hominidae</taxon>
        <taxon>Homo</taxon>
    </lineage>
</organism>
<evidence type="ECO:0000250" key="1">
    <source>
        <dbReference type="UniProtKB" id="O35054"/>
    </source>
</evidence>
<evidence type="ECO:0000255" key="2"/>
<evidence type="ECO:0000269" key="3">
    <source>
    </source>
</evidence>
<evidence type="ECO:0000269" key="4">
    <source>
    </source>
</evidence>
<evidence type="ECO:0000269" key="5">
    <source>
    </source>
</evidence>
<evidence type="ECO:0000269" key="6">
    <source>
    </source>
</evidence>
<evidence type="ECO:0000269" key="7">
    <source>
    </source>
</evidence>
<evidence type="ECO:0000269" key="8">
    <source>
    </source>
</evidence>
<evidence type="ECO:0000269" key="9">
    <source>
    </source>
</evidence>
<evidence type="ECO:0000303" key="10">
    <source>
    </source>
</evidence>
<evidence type="ECO:0000303" key="11">
    <source>
    </source>
</evidence>
<evidence type="ECO:0000303" key="12">
    <source>
    </source>
</evidence>
<evidence type="ECO:0000305" key="13"/>
<evidence type="ECO:0000305" key="14">
    <source>
    </source>
</evidence>
<evidence type="ECO:0000305" key="15">
    <source>
    </source>
</evidence>
<evidence type="ECO:0000312" key="16">
    <source>
        <dbReference type="HGNC" id="HGNC:2046"/>
    </source>
</evidence>
<evidence type="ECO:0007744" key="17">
    <source>
        <dbReference type="PDB" id="5B2G"/>
    </source>
</evidence>
<evidence type="ECO:0007829" key="18">
    <source>
        <dbReference type="PDB" id="5B2G"/>
    </source>
</evidence>
<evidence type="ECO:0007829" key="19">
    <source>
        <dbReference type="PDB" id="7KP4"/>
    </source>
</evidence>
<evidence type="ECO:0007829" key="20">
    <source>
        <dbReference type="PDB" id="9CMI"/>
    </source>
</evidence>
<proteinExistence type="evidence at protein level"/>
<comment type="function">
    <text evidence="1 8 9">Can associate with other claudins to regulate tight junction structural and functional strand dynamics (PubMed:35773259, PubMed:36008380). May coassemble with CLDN8 into tight junction strands containing anion-selective channels that convey paracellular chloride permeability in renal collecting ducts (By similarity) (PubMed:36008380). May integrate into CLDN3 strands to modulate localized tight junction barrier properties (PubMed:35773259, PubMed:36008380). May disrupt strand assembly of channel-forming CLDN2 and CLDN15 and inhibit cation conductance (PubMed:35773259, PubMed:36008380). Cannot form tight junction strands on its own (PubMed:35773259, PubMed:36008380).</text>
</comment>
<comment type="catalytic activity">
    <reaction evidence="1">
        <text>chloride(in) = chloride(out)</text>
        <dbReference type="Rhea" id="RHEA:29823"/>
        <dbReference type="ChEBI" id="CHEBI:17996"/>
    </reaction>
</comment>
<comment type="catalytic activity">
    <reaction evidence="1">
        <text>bromide(in) = bromide(out)</text>
        <dbReference type="Rhea" id="RHEA:75383"/>
        <dbReference type="ChEBI" id="CHEBI:15858"/>
    </reaction>
</comment>
<comment type="catalytic activity">
    <reaction evidence="1">
        <text>iodide(out) = iodide(in)</text>
        <dbReference type="Rhea" id="RHEA:66324"/>
        <dbReference type="ChEBI" id="CHEBI:16382"/>
    </reaction>
</comment>
<comment type="catalytic activity">
    <reaction evidence="1">
        <text>fluoride(in) = fluoride(out)</text>
        <dbReference type="Rhea" id="RHEA:76159"/>
        <dbReference type="ChEBI" id="CHEBI:17051"/>
    </reaction>
</comment>
<comment type="subunit">
    <text evidence="1 3 4 9">Can form heteropolymeric strands with other claudins (PubMed:36008380). Interacts with CLDN8 (By similarity). Interacts with CLDN1 (PubMed:20375010). Directly interacts with TJP1/ZO-1 (PubMed:16236711). Interacts with TJP2/ZO-2 and TJP3/ZO-3 (By similarity). Interacts with EPHA2; phosphorylates CLDN4 and may regulate tight junctions (PubMed:16236711).</text>
</comment>
<comment type="subunit">
    <text evidence="6">(Microbial infection) Interacts (via both extracellular domains) with Clostridium perfringens enterotoxin CPE; the interaction may disrupt claudin assembly in tight junctions.</text>
</comment>
<comment type="interaction">
    <interactant intactId="EBI-9316372">
        <id>O14493</id>
    </interactant>
    <interactant intactId="EBI-13059134">
        <id>Q13520</id>
        <label>AQP6</label>
    </interactant>
    <organismsDiffer>false</organismsDiffer>
    <experiments>3</experiments>
</comment>
<comment type="interaction">
    <interactant intactId="EBI-9316372">
        <id>O14493</id>
    </interactant>
    <interactant intactId="EBI-11343438">
        <id>Q3SXY8</id>
        <label>ARL13B</label>
    </interactant>
    <organismsDiffer>false</organismsDiffer>
    <experiments>3</experiments>
</comment>
<comment type="interaction">
    <interactant intactId="EBI-9316372">
        <id>O14493</id>
    </interactant>
    <interactant intactId="EBI-17710733">
        <id>Q86T13</id>
        <label>CLEC14A</label>
    </interactant>
    <organismsDiffer>false</organismsDiffer>
    <experiments>3</experiments>
</comment>
<comment type="interaction">
    <interactant intactId="EBI-9316372">
        <id>O14493</id>
    </interactant>
    <interactant intactId="EBI-18304435">
        <id>Q5JX71</id>
        <label>FAM209A</label>
    </interactant>
    <organismsDiffer>false</organismsDiffer>
    <experiments>3</experiments>
</comment>
<comment type="interaction">
    <interactant intactId="EBI-9316372">
        <id>O14493</id>
    </interactant>
    <interactant intactId="EBI-2833872">
        <id>O15552</id>
        <label>FFAR2</label>
    </interactant>
    <organismsDiffer>false</organismsDiffer>
    <experiments>3</experiments>
</comment>
<comment type="interaction">
    <interactant intactId="EBI-9316372">
        <id>O14493</id>
    </interactant>
    <interactant intactId="EBI-17458373">
        <id>P48165</id>
        <label>GJA8</label>
    </interactant>
    <organismsDiffer>false</organismsDiffer>
    <experiments>3</experiments>
</comment>
<comment type="interaction">
    <interactant intactId="EBI-9316372">
        <id>O14493</id>
    </interactant>
    <interactant intactId="EBI-712073">
        <id>Q8NBJ4</id>
        <label>GOLM1</label>
    </interactant>
    <organismsDiffer>false</organismsDiffer>
    <experiments>3</experiments>
</comment>
<comment type="interaction">
    <interactant intactId="EBI-9316372">
        <id>O14493</id>
    </interactant>
    <interactant intactId="EBI-18053395">
        <id>Q7Z5P4</id>
        <label>HSD17B13</label>
    </interactant>
    <organismsDiffer>false</organismsDiffer>
    <experiments>3</experiments>
</comment>
<comment type="interaction">
    <interactant intactId="EBI-9316372">
        <id>O14493</id>
    </interactant>
    <interactant intactId="EBI-725421">
        <id>P32942</id>
        <label>ICAM3</label>
    </interactant>
    <organismsDiffer>false</organismsDiffer>
    <experiments>3</experiments>
</comment>
<comment type="interaction">
    <interactant intactId="EBI-9316372">
        <id>O14493</id>
    </interactant>
    <interactant intactId="EBI-373355">
        <id>Q5SR56</id>
        <label>MFSD14B</label>
    </interactant>
    <organismsDiffer>false</organismsDiffer>
    <experiments>3</experiments>
</comment>
<comment type="interaction">
    <interactant intactId="EBI-9316372">
        <id>O14493</id>
    </interactant>
    <interactant intactId="EBI-8032987">
        <id>Q8N9I0</id>
        <label>SYT2</label>
    </interactant>
    <organismsDiffer>false</organismsDiffer>
    <experiments>3</experiments>
</comment>
<comment type="interaction">
    <interactant intactId="EBI-9316372">
        <id>O14493</id>
    </interactant>
    <interactant intactId="EBI-10982110">
        <id>Q96Q45-2</id>
        <label>TMEM237</label>
    </interactant>
    <organismsDiffer>false</organismsDiffer>
    <experiments>3</experiments>
</comment>
<comment type="interaction">
    <interactant intactId="EBI-9316372">
        <id>O14493</id>
    </interactant>
    <interactant intactId="EBI-18178701">
        <id>Q4KMG9</id>
        <label>TMEM52B</label>
    </interactant>
    <organismsDiffer>false</organismsDiffer>
    <experiments>3</experiments>
</comment>
<comment type="interaction">
    <interactant intactId="EBI-9316372">
        <id>O14493</id>
    </interactant>
    <interactant intactId="EBI-10262539">
        <id>Q8IWR1</id>
        <label>TRIM59</label>
    </interactant>
    <organismsDiffer>false</organismsDiffer>
    <experiments>3</experiments>
</comment>
<comment type="interaction">
    <interactant intactId="EBI-9316372">
        <id>O14493</id>
    </interactant>
    <interactant intactId="EBI-12195249">
        <id>Q5TGU0</id>
        <label>TSPO2</label>
    </interactant>
    <organismsDiffer>false</organismsDiffer>
    <experiments>3</experiments>
</comment>
<comment type="subcellular location">
    <subcellularLocation>
        <location evidence="7">Cell junction</location>
        <location evidence="7">Tight junction</location>
    </subcellularLocation>
    <subcellularLocation>
        <location evidence="4">Cell membrane</location>
        <topology evidence="2">Multi-pass membrane protein</topology>
    </subcellularLocation>
</comment>
<comment type="developmental stage">
    <text evidence="5">Expressed in the lungs from 23 weeks of gestation till birth.</text>
</comment>
<comment type="PTM">
    <text evidence="3">Phosphorylated. Phosphorylation by EPHA2 is stimulated by EFNA1 and alters interaction with TJP1.</text>
</comment>
<comment type="disease">
    <text>CLDN4 is located in the Williams-Beuren syndrome (WBS) critical region. WBS results from a hemizygous deletion of several genes on chromosome 7q11.23, thought to arise as a consequence of unequal crossing over between highly homologous low-copy repeat sequences flanking the deleted region.</text>
</comment>
<comment type="similarity">
    <text evidence="13">Belongs to the claudin family.</text>
</comment>
<comment type="caution">
    <text evidence="14 15">The intrinsic role of CLDN4 is debated. A function as an inter-claudin regulator has recently been postulated and may well explain both channel-forming and barrier properties inferred by knockout studies.</text>
</comment>
<comment type="online information" name="Atlas of Genetics and Cytogenetics in Oncology and Haematology">
    <link uri="https://atlasgeneticsoncology.org/gene/42975/CLDN4"/>
</comment>
<keyword id="KW-0002">3D-structure</keyword>
<keyword id="KW-0965">Cell junction</keyword>
<keyword id="KW-1003">Cell membrane</keyword>
<keyword id="KW-0868">Chloride</keyword>
<keyword id="KW-0869">Chloride channel</keyword>
<keyword id="KW-1015">Disulfide bond</keyword>
<keyword id="KW-0407">Ion channel</keyword>
<keyword id="KW-0406">Ion transport</keyword>
<keyword id="KW-0472">Membrane</keyword>
<keyword id="KW-0597">Phosphoprotein</keyword>
<keyword id="KW-1267">Proteomics identification</keyword>
<keyword id="KW-1185">Reference proteome</keyword>
<keyword id="KW-0796">Tight junction</keyword>
<keyword id="KW-0812">Transmembrane</keyword>
<keyword id="KW-1133">Transmembrane helix</keyword>
<keyword id="KW-0813">Transport</keyword>
<keyword id="KW-0856">Williams-Beuren syndrome</keyword>
<sequence>MASMGLQVMGIALAVLGWLAVMLCCALPMWRVTAFIGSNIVTSQTIWEGLWMNCVVQSTGQMQCKVYDSLLALPQDLQAARALVIISIIVAALGVLLSVVGGKCTNCLEDESAKAKTMIVAGVVFLLAGLMVIVPVSWTAHNIIQDFYNPLVASGQKREMGASLYVGWAASGLLLLGGGLLCCNCPPRTDKPYSAKYSAARSAAASNYV</sequence>